<proteinExistence type="inferred from homology"/>
<sequence>MENQKQYPMTQEGFEKLEQELEELKTVKRPEVVEKIKVARSFGDLSENSEYDAAKDEQGFIEQDIQRIEHMIRNALIIEDSGDNNVVQIGKTVTFIEIPDGEEEVYQIVGSAEADAFNGKISNESPIAKSLIGKHLDDEVRVPLPNGAEIKVKITNIQSQ</sequence>
<protein>
    <recommendedName>
        <fullName evidence="1">Transcription elongation factor GreA</fullName>
    </recommendedName>
    <alternativeName>
        <fullName evidence="1">Transcript cleavage factor GreA</fullName>
    </alternativeName>
</protein>
<feature type="chain" id="PRO_1000190224" description="Transcription elongation factor GreA">
    <location>
        <begin position="1"/>
        <end position="160"/>
    </location>
</feature>
<feature type="coiled-coil region" evidence="1">
    <location>
        <begin position="4"/>
        <end position="70"/>
    </location>
</feature>
<comment type="function">
    <text evidence="1">Necessary for efficient RNA polymerase transcription elongation past template-encoded arresting sites. The arresting sites in DNA have the property of trapping a certain fraction of elongating RNA polymerases that pass through, resulting in locked ternary complexes. Cleavage of the nascent transcript by cleavage factors such as GreA or GreB allows the resumption of elongation from the new 3'terminus. GreA releases sequences of 2 to 3 nucleotides.</text>
</comment>
<comment type="similarity">
    <text evidence="1">Belongs to the GreA/GreB family.</text>
</comment>
<gene>
    <name evidence="1" type="primary">greA</name>
    <name type="ordered locus">Sca_1222</name>
</gene>
<keyword id="KW-0175">Coiled coil</keyword>
<keyword id="KW-0238">DNA-binding</keyword>
<keyword id="KW-1185">Reference proteome</keyword>
<keyword id="KW-0804">Transcription</keyword>
<keyword id="KW-0805">Transcription regulation</keyword>
<organism>
    <name type="scientific">Staphylococcus carnosus (strain TM300)</name>
    <dbReference type="NCBI Taxonomy" id="396513"/>
    <lineage>
        <taxon>Bacteria</taxon>
        <taxon>Bacillati</taxon>
        <taxon>Bacillota</taxon>
        <taxon>Bacilli</taxon>
        <taxon>Bacillales</taxon>
        <taxon>Staphylococcaceae</taxon>
        <taxon>Staphylococcus</taxon>
    </lineage>
</organism>
<accession>B9DNJ3</accession>
<reference key="1">
    <citation type="journal article" date="2009" name="Appl. Environ. Microbiol.">
        <title>Genome analysis of the meat starter culture bacterium Staphylococcus carnosus TM300.</title>
        <authorList>
            <person name="Rosenstein R."/>
            <person name="Nerz C."/>
            <person name="Biswas L."/>
            <person name="Resch A."/>
            <person name="Raddatz G."/>
            <person name="Schuster S.C."/>
            <person name="Goetz F."/>
        </authorList>
    </citation>
    <scope>NUCLEOTIDE SEQUENCE [LARGE SCALE GENOMIC DNA]</scope>
    <source>
        <strain>TM300</strain>
    </source>
</reference>
<dbReference type="EMBL" id="AM295250">
    <property type="protein sequence ID" value="CAL28129.1"/>
    <property type="molecule type" value="Genomic_DNA"/>
</dbReference>
<dbReference type="RefSeq" id="WP_015900469.1">
    <property type="nucleotide sequence ID" value="NC_012121.1"/>
</dbReference>
<dbReference type="SMR" id="B9DNJ3"/>
<dbReference type="GeneID" id="93793647"/>
<dbReference type="KEGG" id="sca:SCA_1222"/>
<dbReference type="eggNOG" id="COG0782">
    <property type="taxonomic scope" value="Bacteria"/>
</dbReference>
<dbReference type="HOGENOM" id="CLU_101379_2_1_9"/>
<dbReference type="OrthoDB" id="9808774at2"/>
<dbReference type="BioCyc" id="SCAR396513:SCA_RS06115-MONOMER"/>
<dbReference type="Proteomes" id="UP000000444">
    <property type="component" value="Chromosome"/>
</dbReference>
<dbReference type="GO" id="GO:0003677">
    <property type="term" value="F:DNA binding"/>
    <property type="evidence" value="ECO:0007669"/>
    <property type="project" value="UniProtKB-UniRule"/>
</dbReference>
<dbReference type="GO" id="GO:0070063">
    <property type="term" value="F:RNA polymerase binding"/>
    <property type="evidence" value="ECO:0007669"/>
    <property type="project" value="InterPro"/>
</dbReference>
<dbReference type="GO" id="GO:0006354">
    <property type="term" value="P:DNA-templated transcription elongation"/>
    <property type="evidence" value="ECO:0007669"/>
    <property type="project" value="TreeGrafter"/>
</dbReference>
<dbReference type="GO" id="GO:0032784">
    <property type="term" value="P:regulation of DNA-templated transcription elongation"/>
    <property type="evidence" value="ECO:0007669"/>
    <property type="project" value="UniProtKB-UniRule"/>
</dbReference>
<dbReference type="FunFam" id="1.10.287.180:FF:000001">
    <property type="entry name" value="Transcription elongation factor GreA"/>
    <property type="match status" value="1"/>
</dbReference>
<dbReference type="FunFam" id="3.10.50.30:FF:000001">
    <property type="entry name" value="Transcription elongation factor GreA"/>
    <property type="match status" value="1"/>
</dbReference>
<dbReference type="Gene3D" id="3.10.50.30">
    <property type="entry name" value="Transcription elongation factor, GreA/GreB, C-terminal domain"/>
    <property type="match status" value="1"/>
</dbReference>
<dbReference type="Gene3D" id="1.10.287.180">
    <property type="entry name" value="Transcription elongation factor, GreA/GreB, N-terminal domain"/>
    <property type="match status" value="1"/>
</dbReference>
<dbReference type="HAMAP" id="MF_00105">
    <property type="entry name" value="GreA_GreB"/>
    <property type="match status" value="1"/>
</dbReference>
<dbReference type="InterPro" id="IPR036953">
    <property type="entry name" value="GreA/GreB_C_sf"/>
</dbReference>
<dbReference type="InterPro" id="IPR018151">
    <property type="entry name" value="TF_GreA/GreB_CS"/>
</dbReference>
<dbReference type="InterPro" id="IPR006359">
    <property type="entry name" value="Tscrpt_elong_fac_GreA"/>
</dbReference>
<dbReference type="InterPro" id="IPR028624">
    <property type="entry name" value="Tscrpt_elong_fac_GreA/B"/>
</dbReference>
<dbReference type="InterPro" id="IPR001437">
    <property type="entry name" value="Tscrpt_elong_fac_GreA/B_C"/>
</dbReference>
<dbReference type="InterPro" id="IPR023459">
    <property type="entry name" value="Tscrpt_elong_fac_GreA/B_fam"/>
</dbReference>
<dbReference type="InterPro" id="IPR022691">
    <property type="entry name" value="Tscrpt_elong_fac_GreA/B_N"/>
</dbReference>
<dbReference type="InterPro" id="IPR036805">
    <property type="entry name" value="Tscrpt_elong_fac_GreA/B_N_sf"/>
</dbReference>
<dbReference type="NCBIfam" id="TIGR01462">
    <property type="entry name" value="greA"/>
    <property type="match status" value="1"/>
</dbReference>
<dbReference type="NCBIfam" id="NF001261">
    <property type="entry name" value="PRK00226.1-2"/>
    <property type="match status" value="1"/>
</dbReference>
<dbReference type="NCBIfam" id="NF001263">
    <property type="entry name" value="PRK00226.1-4"/>
    <property type="match status" value="1"/>
</dbReference>
<dbReference type="PANTHER" id="PTHR30437">
    <property type="entry name" value="TRANSCRIPTION ELONGATION FACTOR GREA"/>
    <property type="match status" value="1"/>
</dbReference>
<dbReference type="PANTHER" id="PTHR30437:SF4">
    <property type="entry name" value="TRANSCRIPTION ELONGATION FACTOR GREA"/>
    <property type="match status" value="1"/>
</dbReference>
<dbReference type="Pfam" id="PF01272">
    <property type="entry name" value="GreA_GreB"/>
    <property type="match status" value="1"/>
</dbReference>
<dbReference type="Pfam" id="PF03449">
    <property type="entry name" value="GreA_GreB_N"/>
    <property type="match status" value="1"/>
</dbReference>
<dbReference type="PIRSF" id="PIRSF006092">
    <property type="entry name" value="GreA_GreB"/>
    <property type="match status" value="1"/>
</dbReference>
<dbReference type="SUPFAM" id="SSF54534">
    <property type="entry name" value="FKBP-like"/>
    <property type="match status" value="1"/>
</dbReference>
<dbReference type="SUPFAM" id="SSF46557">
    <property type="entry name" value="GreA transcript cleavage protein, N-terminal domain"/>
    <property type="match status" value="1"/>
</dbReference>
<dbReference type="PROSITE" id="PS00829">
    <property type="entry name" value="GREAB_1"/>
    <property type="match status" value="1"/>
</dbReference>
<dbReference type="PROSITE" id="PS00830">
    <property type="entry name" value="GREAB_2"/>
    <property type="match status" value="1"/>
</dbReference>
<evidence type="ECO:0000255" key="1">
    <source>
        <dbReference type="HAMAP-Rule" id="MF_00105"/>
    </source>
</evidence>
<name>GREA_STACT</name>